<reference key="1">
    <citation type="journal article" date="2006" name="Proc. Natl. Acad. Sci. U.S.A.">
        <title>Molecular genetic anatomy of inter- and intraserotype variation in the human bacterial pathogen group A Streptococcus.</title>
        <authorList>
            <person name="Beres S.B."/>
            <person name="Richter E.W."/>
            <person name="Nagiec M.J."/>
            <person name="Sumby P."/>
            <person name="Porcella S.F."/>
            <person name="DeLeo F.R."/>
            <person name="Musser J.M."/>
        </authorList>
    </citation>
    <scope>NUCLEOTIDE SEQUENCE [LARGE SCALE GENOMIC DNA]</scope>
    <source>
        <strain>MGAS9429</strain>
    </source>
</reference>
<accession>Q1JMI9</accession>
<keyword id="KW-0066">ATP synthesis</keyword>
<keyword id="KW-0067">ATP-binding</keyword>
<keyword id="KW-1003">Cell membrane</keyword>
<keyword id="KW-0139">CF(1)</keyword>
<keyword id="KW-0375">Hydrogen ion transport</keyword>
<keyword id="KW-0406">Ion transport</keyword>
<keyword id="KW-0472">Membrane</keyword>
<keyword id="KW-0547">Nucleotide-binding</keyword>
<keyword id="KW-1278">Translocase</keyword>
<keyword id="KW-0813">Transport</keyword>
<gene>
    <name evidence="1" type="primary">atpD</name>
    <name type="ordered locus">MGAS9429_Spy0635</name>
</gene>
<comment type="function">
    <text evidence="1">Produces ATP from ADP in the presence of a proton gradient across the membrane. The catalytic sites are hosted primarily by the beta subunits.</text>
</comment>
<comment type="catalytic activity">
    <reaction evidence="1">
        <text>ATP + H2O + 4 H(+)(in) = ADP + phosphate + 5 H(+)(out)</text>
        <dbReference type="Rhea" id="RHEA:57720"/>
        <dbReference type="ChEBI" id="CHEBI:15377"/>
        <dbReference type="ChEBI" id="CHEBI:15378"/>
        <dbReference type="ChEBI" id="CHEBI:30616"/>
        <dbReference type="ChEBI" id="CHEBI:43474"/>
        <dbReference type="ChEBI" id="CHEBI:456216"/>
        <dbReference type="EC" id="7.1.2.2"/>
    </reaction>
</comment>
<comment type="subunit">
    <text evidence="1">F-type ATPases have 2 components, CF(1) - the catalytic core - and CF(0) - the membrane proton channel. CF(1) has five subunits: alpha(3), beta(3), gamma(1), delta(1), epsilon(1). CF(0) has three main subunits: a(1), b(2) and c(9-12). The alpha and beta chains form an alternating ring which encloses part of the gamma chain. CF(1) is attached to CF(0) by a central stalk formed by the gamma and epsilon chains, while a peripheral stalk is formed by the delta and b chains.</text>
</comment>
<comment type="subcellular location">
    <subcellularLocation>
        <location evidence="1">Cell membrane</location>
        <topology evidence="1">Peripheral membrane protein</topology>
    </subcellularLocation>
</comment>
<comment type="similarity">
    <text evidence="1">Belongs to the ATPase alpha/beta chains family.</text>
</comment>
<name>ATPB_STRPC</name>
<dbReference type="EC" id="7.1.2.2" evidence="1"/>
<dbReference type="EMBL" id="CP000259">
    <property type="protein sequence ID" value="ABF31823.1"/>
    <property type="molecule type" value="Genomic_DNA"/>
</dbReference>
<dbReference type="RefSeq" id="WP_002985235.1">
    <property type="nucleotide sequence ID" value="NC_008021.1"/>
</dbReference>
<dbReference type="SMR" id="Q1JMI9"/>
<dbReference type="GeneID" id="69901114"/>
<dbReference type="KEGG" id="spk:MGAS9429_Spy0635"/>
<dbReference type="HOGENOM" id="CLU_022398_0_2_9"/>
<dbReference type="Proteomes" id="UP000002433">
    <property type="component" value="Chromosome"/>
</dbReference>
<dbReference type="GO" id="GO:0005886">
    <property type="term" value="C:plasma membrane"/>
    <property type="evidence" value="ECO:0007669"/>
    <property type="project" value="UniProtKB-SubCell"/>
</dbReference>
<dbReference type="GO" id="GO:0045259">
    <property type="term" value="C:proton-transporting ATP synthase complex"/>
    <property type="evidence" value="ECO:0007669"/>
    <property type="project" value="UniProtKB-KW"/>
</dbReference>
<dbReference type="GO" id="GO:0005524">
    <property type="term" value="F:ATP binding"/>
    <property type="evidence" value="ECO:0007669"/>
    <property type="project" value="UniProtKB-UniRule"/>
</dbReference>
<dbReference type="GO" id="GO:0016887">
    <property type="term" value="F:ATP hydrolysis activity"/>
    <property type="evidence" value="ECO:0007669"/>
    <property type="project" value="InterPro"/>
</dbReference>
<dbReference type="GO" id="GO:0046933">
    <property type="term" value="F:proton-transporting ATP synthase activity, rotational mechanism"/>
    <property type="evidence" value="ECO:0007669"/>
    <property type="project" value="UniProtKB-UniRule"/>
</dbReference>
<dbReference type="CDD" id="cd18110">
    <property type="entry name" value="ATP-synt_F1_beta_C"/>
    <property type="match status" value="1"/>
</dbReference>
<dbReference type="CDD" id="cd18115">
    <property type="entry name" value="ATP-synt_F1_beta_N"/>
    <property type="match status" value="1"/>
</dbReference>
<dbReference type="CDD" id="cd01133">
    <property type="entry name" value="F1-ATPase_beta_CD"/>
    <property type="match status" value="1"/>
</dbReference>
<dbReference type="FunFam" id="1.10.1140.10:FF:000001">
    <property type="entry name" value="ATP synthase subunit beta"/>
    <property type="match status" value="1"/>
</dbReference>
<dbReference type="FunFam" id="2.40.10.170:FF:000005">
    <property type="entry name" value="ATP synthase subunit beta"/>
    <property type="match status" value="1"/>
</dbReference>
<dbReference type="FunFam" id="3.40.50.300:FF:000004">
    <property type="entry name" value="ATP synthase subunit beta"/>
    <property type="match status" value="1"/>
</dbReference>
<dbReference type="Gene3D" id="2.40.10.170">
    <property type="match status" value="1"/>
</dbReference>
<dbReference type="Gene3D" id="1.10.1140.10">
    <property type="entry name" value="Bovine Mitochondrial F1-atpase, Atp Synthase Beta Chain, Chain D, domain 3"/>
    <property type="match status" value="1"/>
</dbReference>
<dbReference type="Gene3D" id="3.40.50.300">
    <property type="entry name" value="P-loop containing nucleotide triphosphate hydrolases"/>
    <property type="match status" value="1"/>
</dbReference>
<dbReference type="HAMAP" id="MF_01347">
    <property type="entry name" value="ATP_synth_beta_bact"/>
    <property type="match status" value="1"/>
</dbReference>
<dbReference type="InterPro" id="IPR003593">
    <property type="entry name" value="AAA+_ATPase"/>
</dbReference>
<dbReference type="InterPro" id="IPR055190">
    <property type="entry name" value="ATP-synt_VA_C"/>
</dbReference>
<dbReference type="InterPro" id="IPR005722">
    <property type="entry name" value="ATP_synth_F1_bsu"/>
</dbReference>
<dbReference type="InterPro" id="IPR020003">
    <property type="entry name" value="ATPase_a/bsu_AS"/>
</dbReference>
<dbReference type="InterPro" id="IPR050053">
    <property type="entry name" value="ATPase_alpha/beta_chains"/>
</dbReference>
<dbReference type="InterPro" id="IPR004100">
    <property type="entry name" value="ATPase_F1/V1/A1_a/bsu_N"/>
</dbReference>
<dbReference type="InterPro" id="IPR036121">
    <property type="entry name" value="ATPase_F1/V1/A1_a/bsu_N_sf"/>
</dbReference>
<dbReference type="InterPro" id="IPR000194">
    <property type="entry name" value="ATPase_F1/V1/A1_a/bsu_nucl-bd"/>
</dbReference>
<dbReference type="InterPro" id="IPR024034">
    <property type="entry name" value="ATPase_F1/V1_b/a_C"/>
</dbReference>
<dbReference type="InterPro" id="IPR027417">
    <property type="entry name" value="P-loop_NTPase"/>
</dbReference>
<dbReference type="NCBIfam" id="TIGR01039">
    <property type="entry name" value="atpD"/>
    <property type="match status" value="1"/>
</dbReference>
<dbReference type="PANTHER" id="PTHR15184">
    <property type="entry name" value="ATP SYNTHASE"/>
    <property type="match status" value="1"/>
</dbReference>
<dbReference type="PANTHER" id="PTHR15184:SF71">
    <property type="entry name" value="ATP SYNTHASE SUBUNIT BETA, MITOCHONDRIAL"/>
    <property type="match status" value="1"/>
</dbReference>
<dbReference type="Pfam" id="PF00006">
    <property type="entry name" value="ATP-synt_ab"/>
    <property type="match status" value="1"/>
</dbReference>
<dbReference type="Pfam" id="PF02874">
    <property type="entry name" value="ATP-synt_ab_N"/>
    <property type="match status" value="1"/>
</dbReference>
<dbReference type="Pfam" id="PF22919">
    <property type="entry name" value="ATP-synt_VA_C"/>
    <property type="match status" value="1"/>
</dbReference>
<dbReference type="SMART" id="SM00382">
    <property type="entry name" value="AAA"/>
    <property type="match status" value="1"/>
</dbReference>
<dbReference type="SUPFAM" id="SSF47917">
    <property type="entry name" value="C-terminal domain of alpha and beta subunits of F1 ATP synthase"/>
    <property type="match status" value="1"/>
</dbReference>
<dbReference type="SUPFAM" id="SSF50615">
    <property type="entry name" value="N-terminal domain of alpha and beta subunits of F1 ATP synthase"/>
    <property type="match status" value="1"/>
</dbReference>
<dbReference type="SUPFAM" id="SSF52540">
    <property type="entry name" value="P-loop containing nucleoside triphosphate hydrolases"/>
    <property type="match status" value="1"/>
</dbReference>
<dbReference type="PROSITE" id="PS00152">
    <property type="entry name" value="ATPASE_ALPHA_BETA"/>
    <property type="match status" value="1"/>
</dbReference>
<feature type="chain" id="PRO_0000254393" description="ATP synthase subunit beta">
    <location>
        <begin position="1"/>
        <end position="468"/>
    </location>
</feature>
<feature type="binding site" evidence="1">
    <location>
        <begin position="155"/>
        <end position="162"/>
    </location>
    <ligand>
        <name>ATP</name>
        <dbReference type="ChEBI" id="CHEBI:30616"/>
    </ligand>
</feature>
<evidence type="ECO:0000255" key="1">
    <source>
        <dbReference type="HAMAP-Rule" id="MF_01347"/>
    </source>
</evidence>
<proteinExistence type="inferred from homology"/>
<sequence length="468" mass="51055">MSSGKIAQVVGPVVDVMFASGDKLPEINNALIVYKDSDKKQKIVLEVALELGDGMVRTIAMESTDGLTRGLEVLDTGRAISVPVGKETLGRVFNVLGETIDLEEPFAEDVDRQPIHKKAPSFDELSTSSEILETGIKVIDLLAPYLKGGKVGLFGGAGVGKTVLIQELIHNIAQEHGGISVFTGVGERTREGNDLYWEMKESGVIEKTAMVFGQMNEPPGARMRVALTGLTIAEYFRDVEGQDVLLFIDNIFRFTQAGSEVSALLGRMPSAVGYQPTLATEMGQLQERITSTQKGSVTSIQAIYVPADDYTDPAPATAFAHLDSTTNLERKLTQMGIYPAVDPLASSSRALSPEIVGEEHYAVATEVQRVLQRYRELQDIIAILGMDELSDEEKTLVGRARRIQFFLSQNFNVAEQFTGLPGSYVPVAETVRGFKEILEGKYDDLPEDAFRSVGPIEDVIKKAEKMGF</sequence>
<protein>
    <recommendedName>
        <fullName evidence="1">ATP synthase subunit beta</fullName>
        <ecNumber evidence="1">7.1.2.2</ecNumber>
    </recommendedName>
    <alternativeName>
        <fullName evidence="1">ATP synthase F1 sector subunit beta</fullName>
    </alternativeName>
    <alternativeName>
        <fullName evidence="1">F-ATPase subunit beta</fullName>
    </alternativeName>
</protein>
<organism>
    <name type="scientific">Streptococcus pyogenes serotype M12 (strain MGAS9429)</name>
    <dbReference type="NCBI Taxonomy" id="370551"/>
    <lineage>
        <taxon>Bacteria</taxon>
        <taxon>Bacillati</taxon>
        <taxon>Bacillota</taxon>
        <taxon>Bacilli</taxon>
        <taxon>Lactobacillales</taxon>
        <taxon>Streptococcaceae</taxon>
        <taxon>Streptococcus</taxon>
    </lineage>
</organism>